<gene>
    <name type="primary">iwr1</name>
    <name type="ORF">SPAC23H4.08</name>
</gene>
<accession>O13951</accession>
<reference key="1">
    <citation type="journal article" date="2002" name="Nature">
        <title>The genome sequence of Schizosaccharomyces pombe.</title>
        <authorList>
            <person name="Wood V."/>
            <person name="Gwilliam R."/>
            <person name="Rajandream M.A."/>
            <person name="Lyne M.H."/>
            <person name="Lyne R."/>
            <person name="Stewart A."/>
            <person name="Sgouros J.G."/>
            <person name="Peat N."/>
            <person name="Hayles J."/>
            <person name="Baker S.G."/>
            <person name="Basham D."/>
            <person name="Bowman S."/>
            <person name="Brooks K."/>
            <person name="Brown D."/>
            <person name="Brown S."/>
            <person name="Chillingworth T."/>
            <person name="Churcher C.M."/>
            <person name="Collins M."/>
            <person name="Connor R."/>
            <person name="Cronin A."/>
            <person name="Davis P."/>
            <person name="Feltwell T."/>
            <person name="Fraser A."/>
            <person name="Gentles S."/>
            <person name="Goble A."/>
            <person name="Hamlin N."/>
            <person name="Harris D.E."/>
            <person name="Hidalgo J."/>
            <person name="Hodgson G."/>
            <person name="Holroyd S."/>
            <person name="Hornsby T."/>
            <person name="Howarth S."/>
            <person name="Huckle E.J."/>
            <person name="Hunt S."/>
            <person name="Jagels K."/>
            <person name="James K.D."/>
            <person name="Jones L."/>
            <person name="Jones M."/>
            <person name="Leather S."/>
            <person name="McDonald S."/>
            <person name="McLean J."/>
            <person name="Mooney P."/>
            <person name="Moule S."/>
            <person name="Mungall K.L."/>
            <person name="Murphy L.D."/>
            <person name="Niblett D."/>
            <person name="Odell C."/>
            <person name="Oliver K."/>
            <person name="O'Neil S."/>
            <person name="Pearson D."/>
            <person name="Quail M.A."/>
            <person name="Rabbinowitsch E."/>
            <person name="Rutherford K.M."/>
            <person name="Rutter S."/>
            <person name="Saunders D."/>
            <person name="Seeger K."/>
            <person name="Sharp S."/>
            <person name="Skelton J."/>
            <person name="Simmonds M.N."/>
            <person name="Squares R."/>
            <person name="Squares S."/>
            <person name="Stevens K."/>
            <person name="Taylor K."/>
            <person name="Taylor R.G."/>
            <person name="Tivey A."/>
            <person name="Walsh S.V."/>
            <person name="Warren T."/>
            <person name="Whitehead S."/>
            <person name="Woodward J.R."/>
            <person name="Volckaert G."/>
            <person name="Aert R."/>
            <person name="Robben J."/>
            <person name="Grymonprez B."/>
            <person name="Weltjens I."/>
            <person name="Vanstreels E."/>
            <person name="Rieger M."/>
            <person name="Schaefer M."/>
            <person name="Mueller-Auer S."/>
            <person name="Gabel C."/>
            <person name="Fuchs M."/>
            <person name="Duesterhoeft A."/>
            <person name="Fritzc C."/>
            <person name="Holzer E."/>
            <person name="Moestl D."/>
            <person name="Hilbert H."/>
            <person name="Borzym K."/>
            <person name="Langer I."/>
            <person name="Beck A."/>
            <person name="Lehrach H."/>
            <person name="Reinhardt R."/>
            <person name="Pohl T.M."/>
            <person name="Eger P."/>
            <person name="Zimmermann W."/>
            <person name="Wedler H."/>
            <person name="Wambutt R."/>
            <person name="Purnelle B."/>
            <person name="Goffeau A."/>
            <person name="Cadieu E."/>
            <person name="Dreano S."/>
            <person name="Gloux S."/>
            <person name="Lelaure V."/>
            <person name="Mottier S."/>
            <person name="Galibert F."/>
            <person name="Aves S.J."/>
            <person name="Xiang Z."/>
            <person name="Hunt C."/>
            <person name="Moore K."/>
            <person name="Hurst S.M."/>
            <person name="Lucas M."/>
            <person name="Rochet M."/>
            <person name="Gaillardin C."/>
            <person name="Tallada V.A."/>
            <person name="Garzon A."/>
            <person name="Thode G."/>
            <person name="Daga R.R."/>
            <person name="Cruzado L."/>
            <person name="Jimenez J."/>
            <person name="Sanchez M."/>
            <person name="del Rey F."/>
            <person name="Benito J."/>
            <person name="Dominguez A."/>
            <person name="Revuelta J.L."/>
            <person name="Moreno S."/>
            <person name="Armstrong J."/>
            <person name="Forsburg S.L."/>
            <person name="Cerutti L."/>
            <person name="Lowe T."/>
            <person name="McCombie W.R."/>
            <person name="Paulsen I."/>
            <person name="Potashkin J."/>
            <person name="Shpakovski G.V."/>
            <person name="Ussery D."/>
            <person name="Barrell B.G."/>
            <person name="Nurse P."/>
        </authorList>
    </citation>
    <scope>NUCLEOTIDE SEQUENCE [LARGE SCALE GENOMIC DNA]</scope>
    <source>
        <strain>972 / ATCC 24843</strain>
    </source>
</reference>
<keyword id="KW-0963">Cytoplasm</keyword>
<keyword id="KW-0539">Nucleus</keyword>
<keyword id="KW-0653">Protein transport</keyword>
<keyword id="KW-1185">Reference proteome</keyword>
<keyword id="KW-0813">Transport</keyword>
<dbReference type="EMBL" id="CU329670">
    <property type="protein sequence ID" value="CAB11662.1"/>
    <property type="molecule type" value="Genomic_DNA"/>
</dbReference>
<dbReference type="PIR" id="T38320">
    <property type="entry name" value="T38320"/>
</dbReference>
<dbReference type="RefSeq" id="NP_593398.1">
    <property type="nucleotide sequence ID" value="NM_001018830.2"/>
</dbReference>
<dbReference type="BioGRID" id="278281">
    <property type="interactions" value="250"/>
</dbReference>
<dbReference type="FunCoup" id="O13951">
    <property type="interactions" value="272"/>
</dbReference>
<dbReference type="STRING" id="284812.O13951"/>
<dbReference type="iPTMnet" id="O13951"/>
<dbReference type="PaxDb" id="4896-SPAC23H4.08.1"/>
<dbReference type="EnsemblFungi" id="SPAC23H4.08.1">
    <property type="protein sequence ID" value="SPAC23H4.08.1:pep"/>
    <property type="gene ID" value="SPAC23H4.08"/>
</dbReference>
<dbReference type="GeneID" id="2541789"/>
<dbReference type="KEGG" id="spo:2541789"/>
<dbReference type="PomBase" id="SPAC23H4.08">
    <property type="gene designation" value="iwr1"/>
</dbReference>
<dbReference type="VEuPathDB" id="FungiDB:SPAC23H4.08"/>
<dbReference type="eggNOG" id="ENOG502TAB0">
    <property type="taxonomic scope" value="Eukaryota"/>
</dbReference>
<dbReference type="HOGENOM" id="CLU_1066196_0_0_1"/>
<dbReference type="InParanoid" id="O13951"/>
<dbReference type="OMA" id="YVYDIYE"/>
<dbReference type="PhylomeDB" id="O13951"/>
<dbReference type="PRO" id="PR:O13951"/>
<dbReference type="Proteomes" id="UP000002485">
    <property type="component" value="Chromosome I"/>
</dbReference>
<dbReference type="GO" id="GO:0005737">
    <property type="term" value="C:cytoplasm"/>
    <property type="evidence" value="ECO:0000318"/>
    <property type="project" value="GO_Central"/>
</dbReference>
<dbReference type="GO" id="GO:0005634">
    <property type="term" value="C:nucleus"/>
    <property type="evidence" value="ECO:0000266"/>
    <property type="project" value="PomBase"/>
</dbReference>
<dbReference type="GO" id="GO:0006606">
    <property type="term" value="P:protein import into nucleus"/>
    <property type="evidence" value="ECO:0000266"/>
    <property type="project" value="PomBase"/>
</dbReference>
<dbReference type="InterPro" id="IPR040150">
    <property type="entry name" value="Iwr1"/>
</dbReference>
<dbReference type="InterPro" id="IPR013883">
    <property type="entry name" value="TF_Iwr1_dom"/>
</dbReference>
<dbReference type="PANTHER" id="PTHR28063">
    <property type="entry name" value="RNA POLYMERASE II NUCLEAR LOCALIZATION PROTEIN IWR1"/>
    <property type="match status" value="1"/>
</dbReference>
<dbReference type="PANTHER" id="PTHR28063:SF1">
    <property type="entry name" value="RNA POLYMERASE II NUCLEAR LOCALIZATION PROTEIN IWR1"/>
    <property type="match status" value="1"/>
</dbReference>
<dbReference type="Pfam" id="PF08574">
    <property type="entry name" value="Iwr1"/>
    <property type="match status" value="1"/>
</dbReference>
<protein>
    <recommendedName>
        <fullName>RNA polymerase II nuclear localization protein iwr1</fullName>
    </recommendedName>
</protein>
<sequence>MPLPVLRVKRKASEDPVNALYLELGNNPNSVSSTKRRKFAGRYYFKLSQTLKQDDRYIQINDESSEPTHEDVRNIHSHTKISSLKKNNYGIPVVQTSEDVVKAPTHMDLGSRENTKGILSFSSPRYTIQNLPSTQSNRVFDAIRVEQGHTTYHPHPQLDSMIQEYLSNGDLPLQQSTEDYVYDIYEASSKEPNKPTFAYGVIDALSIPDAFRSSLEQELVSETVDSDKDDPLHDEIDEDSNAESFYQNSYPDEDEWQDSSENDEFAYSDDAEQDFYD</sequence>
<comment type="function">
    <text evidence="1">Directs RNA polymerase II nuclear import.</text>
</comment>
<comment type="subunit">
    <text evidence="1">Associates with RNA polymerase II.</text>
</comment>
<comment type="subcellular location">
    <subcellularLocation>
        <location evidence="1">Cytoplasm</location>
    </subcellularLocation>
    <subcellularLocation>
        <location evidence="1">Nucleus</location>
    </subcellularLocation>
    <text evidence="1">shuttles between the nucleus and cytoplasm.</text>
</comment>
<comment type="similarity">
    <text evidence="3">Belongs to the IWR1/SLC7A6OS family.</text>
</comment>
<feature type="chain" id="PRO_0000339140" description="RNA polymerase II nuclear localization protein iwr1">
    <location>
        <begin position="1"/>
        <end position="277"/>
    </location>
</feature>
<feature type="region of interest" description="Disordered" evidence="2">
    <location>
        <begin position="222"/>
        <end position="277"/>
    </location>
</feature>
<feature type="compositionally biased region" description="Basic and acidic residues" evidence="2">
    <location>
        <begin position="225"/>
        <end position="234"/>
    </location>
</feature>
<feature type="compositionally biased region" description="Acidic residues" evidence="2">
    <location>
        <begin position="251"/>
        <end position="277"/>
    </location>
</feature>
<name>IWR1_SCHPO</name>
<evidence type="ECO:0000250" key="1"/>
<evidence type="ECO:0000256" key="2">
    <source>
        <dbReference type="SAM" id="MobiDB-lite"/>
    </source>
</evidence>
<evidence type="ECO:0000305" key="3"/>
<organism>
    <name type="scientific">Schizosaccharomyces pombe (strain 972 / ATCC 24843)</name>
    <name type="common">Fission yeast</name>
    <dbReference type="NCBI Taxonomy" id="284812"/>
    <lineage>
        <taxon>Eukaryota</taxon>
        <taxon>Fungi</taxon>
        <taxon>Dikarya</taxon>
        <taxon>Ascomycota</taxon>
        <taxon>Taphrinomycotina</taxon>
        <taxon>Schizosaccharomycetes</taxon>
        <taxon>Schizosaccharomycetales</taxon>
        <taxon>Schizosaccharomycetaceae</taxon>
        <taxon>Schizosaccharomyces</taxon>
    </lineage>
</organism>
<proteinExistence type="inferred from homology"/>